<name>MGSA_ECO8A</name>
<protein>
    <recommendedName>
        <fullName evidence="1">Methylglyoxal synthase</fullName>
        <shortName evidence="1">MGS</shortName>
        <ecNumber evidence="1">4.2.3.3</ecNumber>
    </recommendedName>
</protein>
<gene>
    <name evidence="1" type="primary">mgsA</name>
    <name type="ordered locus">ECIAI1_1004</name>
</gene>
<dbReference type="EC" id="4.2.3.3" evidence="1"/>
<dbReference type="EMBL" id="CU928160">
    <property type="protein sequence ID" value="CAQ97868.1"/>
    <property type="molecule type" value="Genomic_DNA"/>
</dbReference>
<dbReference type="RefSeq" id="WP_000424181.1">
    <property type="nucleotide sequence ID" value="NC_011741.1"/>
</dbReference>
<dbReference type="SMR" id="B7M892"/>
<dbReference type="GeneID" id="93776451"/>
<dbReference type="KEGG" id="ecr:ECIAI1_1004"/>
<dbReference type="HOGENOM" id="CLU_120420_0_1_6"/>
<dbReference type="GO" id="GO:0005829">
    <property type="term" value="C:cytosol"/>
    <property type="evidence" value="ECO:0007669"/>
    <property type="project" value="TreeGrafter"/>
</dbReference>
<dbReference type="GO" id="GO:0008929">
    <property type="term" value="F:methylglyoxal synthase activity"/>
    <property type="evidence" value="ECO:0007669"/>
    <property type="project" value="UniProtKB-UniRule"/>
</dbReference>
<dbReference type="GO" id="GO:0019242">
    <property type="term" value="P:methylglyoxal biosynthetic process"/>
    <property type="evidence" value="ECO:0007669"/>
    <property type="project" value="UniProtKB-UniRule"/>
</dbReference>
<dbReference type="CDD" id="cd01422">
    <property type="entry name" value="MGS"/>
    <property type="match status" value="1"/>
</dbReference>
<dbReference type="FunFam" id="3.40.50.1380:FF:000002">
    <property type="entry name" value="Methylglyoxal synthase"/>
    <property type="match status" value="1"/>
</dbReference>
<dbReference type="Gene3D" id="3.40.50.1380">
    <property type="entry name" value="Methylglyoxal synthase-like domain"/>
    <property type="match status" value="1"/>
</dbReference>
<dbReference type="HAMAP" id="MF_00549">
    <property type="entry name" value="Methylglyoxal_synth"/>
    <property type="match status" value="1"/>
</dbReference>
<dbReference type="InterPro" id="IPR004363">
    <property type="entry name" value="Methylgl_synth"/>
</dbReference>
<dbReference type="InterPro" id="IPR018148">
    <property type="entry name" value="Methylglyoxal_synth_AS"/>
</dbReference>
<dbReference type="InterPro" id="IPR011607">
    <property type="entry name" value="MGS-like_dom"/>
</dbReference>
<dbReference type="InterPro" id="IPR036914">
    <property type="entry name" value="MGS-like_dom_sf"/>
</dbReference>
<dbReference type="NCBIfam" id="TIGR00160">
    <property type="entry name" value="MGSA"/>
    <property type="match status" value="1"/>
</dbReference>
<dbReference type="NCBIfam" id="NF003559">
    <property type="entry name" value="PRK05234.1"/>
    <property type="match status" value="1"/>
</dbReference>
<dbReference type="PANTHER" id="PTHR30492">
    <property type="entry name" value="METHYLGLYOXAL SYNTHASE"/>
    <property type="match status" value="1"/>
</dbReference>
<dbReference type="PANTHER" id="PTHR30492:SF0">
    <property type="entry name" value="METHYLGLYOXAL SYNTHASE"/>
    <property type="match status" value="1"/>
</dbReference>
<dbReference type="Pfam" id="PF02142">
    <property type="entry name" value="MGS"/>
    <property type="match status" value="1"/>
</dbReference>
<dbReference type="PIRSF" id="PIRSF006614">
    <property type="entry name" value="Methylglyox_syn"/>
    <property type="match status" value="1"/>
</dbReference>
<dbReference type="SMART" id="SM00851">
    <property type="entry name" value="MGS"/>
    <property type="match status" value="1"/>
</dbReference>
<dbReference type="SUPFAM" id="SSF52335">
    <property type="entry name" value="Methylglyoxal synthase-like"/>
    <property type="match status" value="1"/>
</dbReference>
<dbReference type="PROSITE" id="PS01335">
    <property type="entry name" value="METHYLGLYOXAL_SYNTH"/>
    <property type="match status" value="1"/>
</dbReference>
<dbReference type="PROSITE" id="PS51855">
    <property type="entry name" value="MGS"/>
    <property type="match status" value="1"/>
</dbReference>
<evidence type="ECO:0000255" key="1">
    <source>
        <dbReference type="HAMAP-Rule" id="MF_00549"/>
    </source>
</evidence>
<feature type="chain" id="PRO_1000128989" description="Methylglyoxal synthase">
    <location>
        <begin position="1"/>
        <end position="152"/>
    </location>
</feature>
<feature type="domain" description="MGS-like" evidence="1">
    <location>
        <begin position="6"/>
        <end position="152"/>
    </location>
</feature>
<feature type="active site" description="Proton donor/acceptor" evidence="1">
    <location>
        <position position="71"/>
    </location>
</feature>
<feature type="binding site" evidence="1">
    <location>
        <position position="19"/>
    </location>
    <ligand>
        <name>substrate</name>
    </ligand>
</feature>
<feature type="binding site" evidence="1">
    <location>
        <position position="23"/>
    </location>
    <ligand>
        <name>substrate</name>
    </ligand>
</feature>
<feature type="binding site" evidence="1">
    <location>
        <begin position="45"/>
        <end position="48"/>
    </location>
    <ligand>
        <name>substrate</name>
    </ligand>
</feature>
<feature type="binding site" evidence="1">
    <location>
        <begin position="65"/>
        <end position="66"/>
    </location>
    <ligand>
        <name>substrate</name>
    </ligand>
</feature>
<feature type="binding site" evidence="1">
    <location>
        <position position="98"/>
    </location>
    <ligand>
        <name>substrate</name>
    </ligand>
</feature>
<sequence>MELTTRTLPARKHIALVAHDHCKQMLMSWVERHQPLLEQHVLYATGTTGNLISRATGMNVNAMLSGPMGGDQQVGALISEGKIDVLIFFWDPLNAVPHDPDVKALLRLATVWNIPVATNVATADFIIQSPHFNDAVDILIPDYQRYLADRLK</sequence>
<proteinExistence type="inferred from homology"/>
<keyword id="KW-0456">Lyase</keyword>
<organism>
    <name type="scientific">Escherichia coli O8 (strain IAI1)</name>
    <dbReference type="NCBI Taxonomy" id="585034"/>
    <lineage>
        <taxon>Bacteria</taxon>
        <taxon>Pseudomonadati</taxon>
        <taxon>Pseudomonadota</taxon>
        <taxon>Gammaproteobacteria</taxon>
        <taxon>Enterobacterales</taxon>
        <taxon>Enterobacteriaceae</taxon>
        <taxon>Escherichia</taxon>
    </lineage>
</organism>
<accession>B7M892</accession>
<comment type="function">
    <text evidence="1">Catalyzes the formation of methylglyoxal from dihydroxyacetone phosphate.</text>
</comment>
<comment type="catalytic activity">
    <reaction evidence="1">
        <text>dihydroxyacetone phosphate = methylglyoxal + phosphate</text>
        <dbReference type="Rhea" id="RHEA:17937"/>
        <dbReference type="ChEBI" id="CHEBI:17158"/>
        <dbReference type="ChEBI" id="CHEBI:43474"/>
        <dbReference type="ChEBI" id="CHEBI:57642"/>
        <dbReference type="EC" id="4.2.3.3"/>
    </reaction>
</comment>
<comment type="similarity">
    <text evidence="1">Belongs to the methylglyoxal synthase family.</text>
</comment>
<reference key="1">
    <citation type="journal article" date="2009" name="PLoS Genet.">
        <title>Organised genome dynamics in the Escherichia coli species results in highly diverse adaptive paths.</title>
        <authorList>
            <person name="Touchon M."/>
            <person name="Hoede C."/>
            <person name="Tenaillon O."/>
            <person name="Barbe V."/>
            <person name="Baeriswyl S."/>
            <person name="Bidet P."/>
            <person name="Bingen E."/>
            <person name="Bonacorsi S."/>
            <person name="Bouchier C."/>
            <person name="Bouvet O."/>
            <person name="Calteau A."/>
            <person name="Chiapello H."/>
            <person name="Clermont O."/>
            <person name="Cruveiller S."/>
            <person name="Danchin A."/>
            <person name="Diard M."/>
            <person name="Dossat C."/>
            <person name="Karoui M.E."/>
            <person name="Frapy E."/>
            <person name="Garry L."/>
            <person name="Ghigo J.M."/>
            <person name="Gilles A.M."/>
            <person name="Johnson J."/>
            <person name="Le Bouguenec C."/>
            <person name="Lescat M."/>
            <person name="Mangenot S."/>
            <person name="Martinez-Jehanne V."/>
            <person name="Matic I."/>
            <person name="Nassif X."/>
            <person name="Oztas S."/>
            <person name="Petit M.A."/>
            <person name="Pichon C."/>
            <person name="Rouy Z."/>
            <person name="Ruf C.S."/>
            <person name="Schneider D."/>
            <person name="Tourret J."/>
            <person name="Vacherie B."/>
            <person name="Vallenet D."/>
            <person name="Medigue C."/>
            <person name="Rocha E.P.C."/>
            <person name="Denamur E."/>
        </authorList>
    </citation>
    <scope>NUCLEOTIDE SEQUENCE [LARGE SCALE GENOMIC DNA]</scope>
    <source>
        <strain>IAI1</strain>
    </source>
</reference>